<keyword id="KW-1185">Reference proteome</keyword>
<keyword id="KW-0687">Ribonucleoprotein</keyword>
<keyword id="KW-0689">Ribosomal protein</keyword>
<proteinExistence type="inferred from homology"/>
<organism>
    <name type="scientific">Oceanobacillus iheyensis (strain DSM 14371 / CIP 107618 / JCM 11309 / KCTC 3954 / HTE831)</name>
    <dbReference type="NCBI Taxonomy" id="221109"/>
    <lineage>
        <taxon>Bacteria</taxon>
        <taxon>Bacillati</taxon>
        <taxon>Bacillota</taxon>
        <taxon>Bacilli</taxon>
        <taxon>Bacillales</taxon>
        <taxon>Bacillaceae</taxon>
        <taxon>Oceanobacillus</taxon>
    </lineage>
</organism>
<comment type="PTM">
    <text evidence="1">The N-terminus is cleaved by ribosomal processing cysteine protease Prp.</text>
</comment>
<comment type="similarity">
    <text evidence="2">Belongs to the bacterial ribosomal protein bL27 family.</text>
</comment>
<feature type="propeptide" id="PRO_0000459922" evidence="1">
    <location>
        <begin position="1"/>
        <end position="9"/>
    </location>
</feature>
<feature type="chain" id="PRO_0000181136" description="Large ribosomal subunit protein bL27">
    <location>
        <begin position="10"/>
        <end position="96"/>
    </location>
</feature>
<feature type="region of interest" description="Disordered" evidence="3">
    <location>
        <begin position="1"/>
        <end position="36"/>
    </location>
</feature>
<feature type="compositionally biased region" description="Polar residues" evidence="3">
    <location>
        <begin position="8"/>
        <end position="19"/>
    </location>
</feature>
<feature type="compositionally biased region" description="Basic and acidic residues" evidence="3">
    <location>
        <begin position="20"/>
        <end position="35"/>
    </location>
</feature>
<evidence type="ECO:0000250" key="1">
    <source>
        <dbReference type="UniProtKB" id="Q2FXT0"/>
    </source>
</evidence>
<evidence type="ECO:0000255" key="2">
    <source>
        <dbReference type="HAMAP-Rule" id="MF_00539"/>
    </source>
</evidence>
<evidence type="ECO:0000256" key="3">
    <source>
        <dbReference type="SAM" id="MobiDB-lite"/>
    </source>
</evidence>
<evidence type="ECO:0000305" key="4"/>
<accession>Q8EPP8</accession>
<dbReference type="EMBL" id="BA000028">
    <property type="protein sequence ID" value="BAC14000.1"/>
    <property type="molecule type" value="Genomic_DNA"/>
</dbReference>
<dbReference type="RefSeq" id="WP_011066439.1">
    <property type="nucleotide sequence ID" value="NC_004193.1"/>
</dbReference>
<dbReference type="SMR" id="Q8EPP8"/>
<dbReference type="STRING" id="221109.gene:10734290"/>
<dbReference type="KEGG" id="oih:OB2044"/>
<dbReference type="eggNOG" id="COG0211">
    <property type="taxonomic scope" value="Bacteria"/>
</dbReference>
<dbReference type="HOGENOM" id="CLU_095424_4_0_9"/>
<dbReference type="OrthoDB" id="9803474at2"/>
<dbReference type="PhylomeDB" id="Q8EPP8"/>
<dbReference type="Proteomes" id="UP000000822">
    <property type="component" value="Chromosome"/>
</dbReference>
<dbReference type="GO" id="GO:0022625">
    <property type="term" value="C:cytosolic large ribosomal subunit"/>
    <property type="evidence" value="ECO:0007669"/>
    <property type="project" value="TreeGrafter"/>
</dbReference>
<dbReference type="GO" id="GO:0003735">
    <property type="term" value="F:structural constituent of ribosome"/>
    <property type="evidence" value="ECO:0007669"/>
    <property type="project" value="InterPro"/>
</dbReference>
<dbReference type="GO" id="GO:0006412">
    <property type="term" value="P:translation"/>
    <property type="evidence" value="ECO:0007669"/>
    <property type="project" value="UniProtKB-UniRule"/>
</dbReference>
<dbReference type="FunFam" id="2.40.50.100:FF:000004">
    <property type="entry name" value="50S ribosomal protein L27"/>
    <property type="match status" value="1"/>
</dbReference>
<dbReference type="Gene3D" id="2.40.50.100">
    <property type="match status" value="1"/>
</dbReference>
<dbReference type="HAMAP" id="MF_00539">
    <property type="entry name" value="Ribosomal_bL27"/>
    <property type="match status" value="1"/>
</dbReference>
<dbReference type="InterPro" id="IPR001684">
    <property type="entry name" value="Ribosomal_bL27"/>
</dbReference>
<dbReference type="InterPro" id="IPR018261">
    <property type="entry name" value="Ribosomal_bL27_CS"/>
</dbReference>
<dbReference type="NCBIfam" id="TIGR00062">
    <property type="entry name" value="L27"/>
    <property type="match status" value="1"/>
</dbReference>
<dbReference type="PANTHER" id="PTHR15893:SF0">
    <property type="entry name" value="LARGE RIBOSOMAL SUBUNIT PROTEIN BL27M"/>
    <property type="match status" value="1"/>
</dbReference>
<dbReference type="PANTHER" id="PTHR15893">
    <property type="entry name" value="RIBOSOMAL PROTEIN L27"/>
    <property type="match status" value="1"/>
</dbReference>
<dbReference type="Pfam" id="PF01016">
    <property type="entry name" value="Ribosomal_L27"/>
    <property type="match status" value="1"/>
</dbReference>
<dbReference type="PRINTS" id="PR00063">
    <property type="entry name" value="RIBOSOMALL27"/>
</dbReference>
<dbReference type="SUPFAM" id="SSF110324">
    <property type="entry name" value="Ribosomal L27 protein-like"/>
    <property type="match status" value="1"/>
</dbReference>
<dbReference type="PROSITE" id="PS00831">
    <property type="entry name" value="RIBOSOMAL_L27"/>
    <property type="match status" value="1"/>
</dbReference>
<reference key="1">
    <citation type="journal article" date="2002" name="Nucleic Acids Res.">
        <title>Genome sequence of Oceanobacillus iheyensis isolated from the Iheya Ridge and its unexpected adaptive capabilities to extreme environments.</title>
        <authorList>
            <person name="Takami H."/>
            <person name="Takaki Y."/>
            <person name="Uchiyama I."/>
        </authorList>
    </citation>
    <scope>NUCLEOTIDE SEQUENCE [LARGE SCALE GENOMIC DNA]</scope>
    <source>
        <strain>DSM 14371 / CIP 107618 / JCM 11309 / KCTC 3954 / HTE831</strain>
    </source>
</reference>
<protein>
    <recommendedName>
        <fullName evidence="2">Large ribosomal subunit protein bL27</fullName>
    </recommendedName>
    <alternativeName>
        <fullName evidence="4">50S ribosomal protein L27</fullName>
    </alternativeName>
</protein>
<sequence length="96" mass="10664">MLRLDLQFFSTKKGQGSSKNGRDSESKRLGSKRADGQFVSGGSILYRQRGTKIYPGENVGRGGDDTLFSKIDGVVKFERYGRNRKKVSVYPVAKEA</sequence>
<name>RL27_OCEIH</name>
<gene>
    <name evidence="2" type="primary">rpmA</name>
    <name type="ordered locus">OB2044</name>
</gene>